<dbReference type="EC" id="2.1.1.192" evidence="1"/>
<dbReference type="EMBL" id="AE000657">
    <property type="protein sequence ID" value="AAC06702.1"/>
    <property type="molecule type" value="Genomic_DNA"/>
</dbReference>
<dbReference type="PIR" id="H70337">
    <property type="entry name" value="H70337"/>
</dbReference>
<dbReference type="RefSeq" id="NP_213292.1">
    <property type="nucleotide sequence ID" value="NC_000918.1"/>
</dbReference>
<dbReference type="RefSeq" id="WP_010880230.1">
    <property type="nucleotide sequence ID" value="NC_000918.1"/>
</dbReference>
<dbReference type="SMR" id="O66732"/>
<dbReference type="FunCoup" id="O66732">
    <property type="interactions" value="469"/>
</dbReference>
<dbReference type="STRING" id="224324.aq_416"/>
<dbReference type="EnsemblBacteria" id="AAC06702">
    <property type="protein sequence ID" value="AAC06702"/>
    <property type="gene ID" value="aq_416"/>
</dbReference>
<dbReference type="KEGG" id="aae:aq_416"/>
<dbReference type="PATRIC" id="fig|224324.8.peg.342"/>
<dbReference type="eggNOG" id="COG0820">
    <property type="taxonomic scope" value="Bacteria"/>
</dbReference>
<dbReference type="HOGENOM" id="CLU_029101_2_0_0"/>
<dbReference type="InParanoid" id="O66732"/>
<dbReference type="OrthoDB" id="9793973at2"/>
<dbReference type="Proteomes" id="UP000000798">
    <property type="component" value="Chromosome"/>
</dbReference>
<dbReference type="GO" id="GO:0005737">
    <property type="term" value="C:cytoplasm"/>
    <property type="evidence" value="ECO:0007669"/>
    <property type="project" value="UniProtKB-SubCell"/>
</dbReference>
<dbReference type="GO" id="GO:0051539">
    <property type="term" value="F:4 iron, 4 sulfur cluster binding"/>
    <property type="evidence" value="ECO:0007669"/>
    <property type="project" value="UniProtKB-UniRule"/>
</dbReference>
<dbReference type="GO" id="GO:0046872">
    <property type="term" value="F:metal ion binding"/>
    <property type="evidence" value="ECO:0007669"/>
    <property type="project" value="UniProtKB-KW"/>
</dbReference>
<dbReference type="GO" id="GO:0070040">
    <property type="term" value="F:rRNA (adenine(2503)-C2-)-methyltransferase activity"/>
    <property type="evidence" value="ECO:0007669"/>
    <property type="project" value="UniProtKB-UniRule"/>
</dbReference>
<dbReference type="GO" id="GO:0019843">
    <property type="term" value="F:rRNA binding"/>
    <property type="evidence" value="ECO:0007669"/>
    <property type="project" value="UniProtKB-UniRule"/>
</dbReference>
<dbReference type="GO" id="GO:0002935">
    <property type="term" value="F:tRNA (adenine(37)-C2)-methyltransferase activity"/>
    <property type="evidence" value="ECO:0007669"/>
    <property type="project" value="UniProtKB-UniRule"/>
</dbReference>
<dbReference type="GO" id="GO:0000049">
    <property type="term" value="F:tRNA binding"/>
    <property type="evidence" value="ECO:0007669"/>
    <property type="project" value="UniProtKB-UniRule"/>
</dbReference>
<dbReference type="GO" id="GO:0070475">
    <property type="term" value="P:rRNA base methylation"/>
    <property type="evidence" value="ECO:0000318"/>
    <property type="project" value="GO_Central"/>
</dbReference>
<dbReference type="GO" id="GO:0030488">
    <property type="term" value="P:tRNA methylation"/>
    <property type="evidence" value="ECO:0000318"/>
    <property type="project" value="GO_Central"/>
</dbReference>
<dbReference type="CDD" id="cd01335">
    <property type="entry name" value="Radical_SAM"/>
    <property type="match status" value="1"/>
</dbReference>
<dbReference type="FunFam" id="3.20.20.70:FF:000014">
    <property type="entry name" value="Probable dual-specificity RNA methyltransferase RlmN"/>
    <property type="match status" value="1"/>
</dbReference>
<dbReference type="Gene3D" id="1.10.150.530">
    <property type="match status" value="1"/>
</dbReference>
<dbReference type="Gene3D" id="3.20.20.70">
    <property type="entry name" value="Aldolase class I"/>
    <property type="match status" value="1"/>
</dbReference>
<dbReference type="HAMAP" id="MF_01849">
    <property type="entry name" value="RNA_methyltr_RlmN"/>
    <property type="match status" value="1"/>
</dbReference>
<dbReference type="InterPro" id="IPR013785">
    <property type="entry name" value="Aldolase_TIM"/>
</dbReference>
<dbReference type="InterPro" id="IPR040072">
    <property type="entry name" value="Methyltransferase_A"/>
</dbReference>
<dbReference type="InterPro" id="IPR048641">
    <property type="entry name" value="RlmN_N"/>
</dbReference>
<dbReference type="InterPro" id="IPR027492">
    <property type="entry name" value="RNA_MTrfase_RlmN"/>
</dbReference>
<dbReference type="InterPro" id="IPR004383">
    <property type="entry name" value="rRNA_lsu_MTrfase_RlmN/Cfr"/>
</dbReference>
<dbReference type="InterPro" id="IPR007197">
    <property type="entry name" value="rSAM"/>
</dbReference>
<dbReference type="NCBIfam" id="TIGR00048">
    <property type="entry name" value="rRNA_mod_RlmN"/>
    <property type="match status" value="1"/>
</dbReference>
<dbReference type="PANTHER" id="PTHR30544">
    <property type="entry name" value="23S RRNA METHYLTRANSFERASE"/>
    <property type="match status" value="1"/>
</dbReference>
<dbReference type="PANTHER" id="PTHR30544:SF5">
    <property type="entry name" value="RADICAL SAM CORE DOMAIN-CONTAINING PROTEIN"/>
    <property type="match status" value="1"/>
</dbReference>
<dbReference type="Pfam" id="PF04055">
    <property type="entry name" value="Radical_SAM"/>
    <property type="match status" value="1"/>
</dbReference>
<dbReference type="Pfam" id="PF21016">
    <property type="entry name" value="RlmN_N"/>
    <property type="match status" value="1"/>
</dbReference>
<dbReference type="PIRSF" id="PIRSF006004">
    <property type="entry name" value="CHP00048"/>
    <property type="match status" value="1"/>
</dbReference>
<dbReference type="SFLD" id="SFLDF00275">
    <property type="entry name" value="adenosine_C2_methyltransferase"/>
    <property type="match status" value="1"/>
</dbReference>
<dbReference type="SFLD" id="SFLDS00029">
    <property type="entry name" value="Radical_SAM"/>
    <property type="match status" value="1"/>
</dbReference>
<dbReference type="SUPFAM" id="SSF102114">
    <property type="entry name" value="Radical SAM enzymes"/>
    <property type="match status" value="1"/>
</dbReference>
<dbReference type="PROSITE" id="PS51918">
    <property type="entry name" value="RADICAL_SAM"/>
    <property type="match status" value="1"/>
</dbReference>
<reference key="1">
    <citation type="journal article" date="1998" name="Nature">
        <title>The complete genome of the hyperthermophilic bacterium Aquifex aeolicus.</title>
        <authorList>
            <person name="Deckert G."/>
            <person name="Warren P.V."/>
            <person name="Gaasterland T."/>
            <person name="Young W.G."/>
            <person name="Lenox A.L."/>
            <person name="Graham D.E."/>
            <person name="Overbeek R."/>
            <person name="Snead M.A."/>
            <person name="Keller M."/>
            <person name="Aujay M."/>
            <person name="Huber R."/>
            <person name="Feldman R.A."/>
            <person name="Short J.M."/>
            <person name="Olsen G.J."/>
            <person name="Swanson R.V."/>
        </authorList>
    </citation>
    <scope>NUCLEOTIDE SEQUENCE [LARGE SCALE GENOMIC DNA]</scope>
    <source>
        <strain>VF5</strain>
    </source>
</reference>
<gene>
    <name evidence="1" type="primary">rlmN</name>
    <name type="ordered locus">aq_416</name>
</gene>
<keyword id="KW-0004">4Fe-4S</keyword>
<keyword id="KW-0963">Cytoplasm</keyword>
<keyword id="KW-1015">Disulfide bond</keyword>
<keyword id="KW-0408">Iron</keyword>
<keyword id="KW-0411">Iron-sulfur</keyword>
<keyword id="KW-0479">Metal-binding</keyword>
<keyword id="KW-0489">Methyltransferase</keyword>
<keyword id="KW-1185">Reference proteome</keyword>
<keyword id="KW-0698">rRNA processing</keyword>
<keyword id="KW-0949">S-adenosyl-L-methionine</keyword>
<keyword id="KW-0808">Transferase</keyword>
<keyword id="KW-0819">tRNA processing</keyword>
<feature type="chain" id="PRO_0000350018" description="Probable dual-specificity RNA methyltransferase RlmN">
    <location>
        <begin position="1"/>
        <end position="348"/>
    </location>
</feature>
<feature type="domain" description="Radical SAM core" evidence="2">
    <location>
        <begin position="95"/>
        <end position="330"/>
    </location>
</feature>
<feature type="active site" description="Proton acceptor" evidence="1">
    <location>
        <position position="89"/>
    </location>
</feature>
<feature type="active site" description="S-methylcysteine intermediate" evidence="1">
    <location>
        <position position="335"/>
    </location>
</feature>
<feature type="binding site" evidence="1">
    <location>
        <position position="109"/>
    </location>
    <ligand>
        <name>[4Fe-4S] cluster</name>
        <dbReference type="ChEBI" id="CHEBI:49883"/>
        <note>4Fe-4S-S-AdoMet</note>
    </ligand>
</feature>
<feature type="binding site" evidence="1">
    <location>
        <position position="113"/>
    </location>
    <ligand>
        <name>[4Fe-4S] cluster</name>
        <dbReference type="ChEBI" id="CHEBI:49883"/>
        <note>4Fe-4S-S-AdoMet</note>
    </ligand>
</feature>
<feature type="binding site" evidence="1">
    <location>
        <position position="116"/>
    </location>
    <ligand>
        <name>[4Fe-4S] cluster</name>
        <dbReference type="ChEBI" id="CHEBI:49883"/>
        <note>4Fe-4S-S-AdoMet</note>
    </ligand>
</feature>
<feature type="binding site" evidence="1">
    <location>
        <begin position="157"/>
        <end position="158"/>
    </location>
    <ligand>
        <name>S-adenosyl-L-methionine</name>
        <dbReference type="ChEBI" id="CHEBI:59789"/>
    </ligand>
</feature>
<feature type="binding site" evidence="1">
    <location>
        <position position="189"/>
    </location>
    <ligand>
        <name>S-adenosyl-L-methionine</name>
        <dbReference type="ChEBI" id="CHEBI:59789"/>
    </ligand>
</feature>
<feature type="binding site" evidence="1">
    <location>
        <begin position="214"/>
        <end position="216"/>
    </location>
    <ligand>
        <name>S-adenosyl-L-methionine</name>
        <dbReference type="ChEBI" id="CHEBI:59789"/>
    </ligand>
</feature>
<feature type="binding site" evidence="1">
    <location>
        <position position="292"/>
    </location>
    <ligand>
        <name>S-adenosyl-L-methionine</name>
        <dbReference type="ChEBI" id="CHEBI:59789"/>
    </ligand>
</feature>
<feature type="disulfide bond" description="(transient)" evidence="1">
    <location>
        <begin position="102"/>
        <end position="335"/>
    </location>
</feature>
<name>RLMN_AQUAE</name>
<organism>
    <name type="scientific">Aquifex aeolicus (strain VF5)</name>
    <dbReference type="NCBI Taxonomy" id="224324"/>
    <lineage>
        <taxon>Bacteria</taxon>
        <taxon>Pseudomonadati</taxon>
        <taxon>Aquificota</taxon>
        <taxon>Aquificia</taxon>
        <taxon>Aquificales</taxon>
        <taxon>Aquificaceae</taxon>
        <taxon>Aquifex</taxon>
    </lineage>
</organism>
<protein>
    <recommendedName>
        <fullName evidence="1">Probable dual-specificity RNA methyltransferase RlmN</fullName>
        <ecNumber evidence="1">2.1.1.192</ecNumber>
    </recommendedName>
    <alternativeName>
        <fullName evidence="1">23S rRNA (adenine(2503)-C(2))-methyltransferase</fullName>
    </alternativeName>
    <alternativeName>
        <fullName evidence="1">23S rRNA m2A2503 methyltransferase</fullName>
    </alternativeName>
    <alternativeName>
        <fullName evidence="1">Ribosomal RNA large subunit methyltransferase N</fullName>
    </alternativeName>
    <alternativeName>
        <fullName evidence="1">tRNA (adenine(37)-C(2))-methyltransferase</fullName>
    </alternativeName>
    <alternativeName>
        <fullName evidence="1">tRNA m2A37 methyltransferase</fullName>
    </alternativeName>
</protein>
<sequence length="348" mass="40249">MEFVTNYTLEELKKRFTELGLEPYRAKQVFRWVYKKFVTDFEKMTDLGKKHRELLKEHFAFHPLEKLDRVEAPDAVKYLFKTKDGHILETVLIKERDHYTLCVSSQIGCAVGCTFCATALDGLKRNLSTAEIIDQYLQVQQDLGEEKIRNVVFMGMGEPLANYENVRKAVEIMVSPEGLDLSKRRITISTSGIVAQIKRMAQDPVMKEVNLAVSLNAVSQKKREELMPLTKTNTLEELMEVLKNYPLPKYRRITLEYVLIKGVNDSPNDAERLAKLIGRHKKKFKVNLIPFNPDPNLPYERPALTDIMKFQKVLWKYGISNFVRFSKGVEVFGACGQLRTQRLQLQRV</sequence>
<accession>O66732</accession>
<evidence type="ECO:0000255" key="1">
    <source>
        <dbReference type="HAMAP-Rule" id="MF_01849"/>
    </source>
</evidence>
<evidence type="ECO:0000255" key="2">
    <source>
        <dbReference type="PROSITE-ProRule" id="PRU01266"/>
    </source>
</evidence>
<comment type="function">
    <text evidence="1">Specifically methylates position 2 of adenine 2503 in 23S rRNA and position 2 of adenine 37 in tRNAs.</text>
</comment>
<comment type="catalytic activity">
    <reaction evidence="1">
        <text>adenosine(2503) in 23S rRNA + 2 reduced [2Fe-2S]-[ferredoxin] + 2 S-adenosyl-L-methionine = 2-methyladenosine(2503) in 23S rRNA + 5'-deoxyadenosine + L-methionine + 2 oxidized [2Fe-2S]-[ferredoxin] + S-adenosyl-L-homocysteine</text>
        <dbReference type="Rhea" id="RHEA:42916"/>
        <dbReference type="Rhea" id="RHEA-COMP:10000"/>
        <dbReference type="Rhea" id="RHEA-COMP:10001"/>
        <dbReference type="Rhea" id="RHEA-COMP:10152"/>
        <dbReference type="Rhea" id="RHEA-COMP:10282"/>
        <dbReference type="ChEBI" id="CHEBI:17319"/>
        <dbReference type="ChEBI" id="CHEBI:33737"/>
        <dbReference type="ChEBI" id="CHEBI:33738"/>
        <dbReference type="ChEBI" id="CHEBI:57844"/>
        <dbReference type="ChEBI" id="CHEBI:57856"/>
        <dbReference type="ChEBI" id="CHEBI:59789"/>
        <dbReference type="ChEBI" id="CHEBI:74411"/>
        <dbReference type="ChEBI" id="CHEBI:74497"/>
        <dbReference type="EC" id="2.1.1.192"/>
    </reaction>
</comment>
<comment type="catalytic activity">
    <reaction evidence="1">
        <text>adenosine(37) in tRNA + 2 reduced [2Fe-2S]-[ferredoxin] + 2 S-adenosyl-L-methionine = 2-methyladenosine(37) in tRNA + 5'-deoxyadenosine + L-methionine + 2 oxidized [2Fe-2S]-[ferredoxin] + S-adenosyl-L-homocysteine</text>
        <dbReference type="Rhea" id="RHEA:43332"/>
        <dbReference type="Rhea" id="RHEA-COMP:10000"/>
        <dbReference type="Rhea" id="RHEA-COMP:10001"/>
        <dbReference type="Rhea" id="RHEA-COMP:10162"/>
        <dbReference type="Rhea" id="RHEA-COMP:10485"/>
        <dbReference type="ChEBI" id="CHEBI:17319"/>
        <dbReference type="ChEBI" id="CHEBI:33737"/>
        <dbReference type="ChEBI" id="CHEBI:33738"/>
        <dbReference type="ChEBI" id="CHEBI:57844"/>
        <dbReference type="ChEBI" id="CHEBI:57856"/>
        <dbReference type="ChEBI" id="CHEBI:59789"/>
        <dbReference type="ChEBI" id="CHEBI:74411"/>
        <dbReference type="ChEBI" id="CHEBI:74497"/>
        <dbReference type="EC" id="2.1.1.192"/>
    </reaction>
</comment>
<comment type="cofactor">
    <cofactor evidence="1">
        <name>[4Fe-4S] cluster</name>
        <dbReference type="ChEBI" id="CHEBI:49883"/>
    </cofactor>
    <text evidence="1">Binds 1 [4Fe-4S] cluster. The cluster is coordinated with 3 cysteines and an exchangeable S-adenosyl-L-methionine.</text>
</comment>
<comment type="subcellular location">
    <subcellularLocation>
        <location evidence="1">Cytoplasm</location>
    </subcellularLocation>
</comment>
<comment type="miscellaneous">
    <text evidence="1">Reaction proceeds by a ping-pong mechanism involving intermediate methylation of a conserved cysteine residue.</text>
</comment>
<comment type="similarity">
    <text evidence="1">Belongs to the radical SAM superfamily. RlmN family.</text>
</comment>
<proteinExistence type="inferred from homology"/>